<proteinExistence type="evidence at protein level"/>
<reference key="1">
    <citation type="journal article" date="1992" name="FEMS Microbiol. Lett.">
        <title>Characterization of the genes coding for the F1F0 subunits of the sodium dependent ATPase of Propionigenium modestum.</title>
        <authorList>
            <person name="Krumholz L.R."/>
            <person name="Esser U."/>
            <person name="Simoni R.D."/>
        </authorList>
    </citation>
    <scope>NUCLEOTIDE SEQUENCE [GENOMIC DNA]</scope>
    <source>
        <strain>DSM 2376 / Gra Succ2</strain>
    </source>
</reference>
<reference key="2">
    <citation type="journal article" date="1992" name="Eur. J. Biochem.">
        <title>Cloning, sequencing and in vivo expression of genes encoding the F0 part of the sodium-ion-dependent ATP synthase of Propionigenium modestum in Escherichia coli.</title>
        <authorList>
            <person name="Kaim G.W."/>
            <person name="Ludwig W."/>
            <person name="Dimroth P."/>
            <person name="Schleifer K.H."/>
        </authorList>
    </citation>
    <scope>NUCLEOTIDE SEQUENCE [GENOMIC DNA] OF 1-118</scope>
    <source>
        <strain>DSM 2376 / Gra Succ2</strain>
    </source>
</reference>
<reference key="3">
    <citation type="journal article" date="1993" name="FEBS Lett.">
        <title>N-terminal amino acid sequences of the subunits of the Na(+)-translocating F1F0 ATPase from Propionigenium modestum.</title>
        <authorList>
            <person name="Gerike U."/>
            <person name="Dimroth P."/>
        </authorList>
    </citation>
    <scope>PROTEIN SEQUENCE OF 1-7</scope>
</reference>
<dbReference type="EMBL" id="X58461">
    <property type="protein sequence ID" value="CAA41371.1"/>
    <property type="molecule type" value="Genomic_DNA"/>
</dbReference>
<dbReference type="EMBL" id="X66102">
    <property type="protein sequence ID" value="CAA46897.1"/>
    <property type="molecule type" value="Genomic_DNA"/>
</dbReference>
<dbReference type="PIR" id="S29038">
    <property type="entry name" value="S29038"/>
</dbReference>
<dbReference type="SMR" id="P29708"/>
<dbReference type="TCDB" id="3.A.2.1.2">
    <property type="family name" value="the h+- or na+-translocating f-type, v-type and a-type atpase (f-atpase) superfamily"/>
</dbReference>
<dbReference type="GO" id="GO:0005886">
    <property type="term" value="C:plasma membrane"/>
    <property type="evidence" value="ECO:0007669"/>
    <property type="project" value="UniProtKB-SubCell"/>
</dbReference>
<dbReference type="GO" id="GO:0045259">
    <property type="term" value="C:proton-transporting ATP synthase complex"/>
    <property type="evidence" value="ECO:0007669"/>
    <property type="project" value="UniProtKB-KW"/>
</dbReference>
<dbReference type="GO" id="GO:0046933">
    <property type="term" value="F:proton-transporting ATP synthase activity, rotational mechanism"/>
    <property type="evidence" value="ECO:0007669"/>
    <property type="project" value="UniProtKB-UniRule"/>
</dbReference>
<dbReference type="GO" id="GO:0006814">
    <property type="term" value="P:sodium ion transport"/>
    <property type="evidence" value="ECO:0007669"/>
    <property type="project" value="UniProtKB-KW"/>
</dbReference>
<dbReference type="Gene3D" id="1.10.520.20">
    <property type="entry name" value="N-terminal domain of the delta subunit of the F1F0-ATP synthase"/>
    <property type="match status" value="1"/>
</dbReference>
<dbReference type="HAMAP" id="MF_01416">
    <property type="entry name" value="ATP_synth_delta_bact"/>
    <property type="match status" value="1"/>
</dbReference>
<dbReference type="InterPro" id="IPR026015">
    <property type="entry name" value="ATP_synth_OSCP/delta_N_sf"/>
</dbReference>
<dbReference type="InterPro" id="IPR020781">
    <property type="entry name" value="ATPase_OSCP/d_CS"/>
</dbReference>
<dbReference type="InterPro" id="IPR000711">
    <property type="entry name" value="ATPase_OSCP/dsu"/>
</dbReference>
<dbReference type="NCBIfam" id="TIGR01145">
    <property type="entry name" value="ATP_synt_delta"/>
    <property type="match status" value="1"/>
</dbReference>
<dbReference type="PANTHER" id="PTHR11910">
    <property type="entry name" value="ATP SYNTHASE DELTA CHAIN"/>
    <property type="match status" value="1"/>
</dbReference>
<dbReference type="Pfam" id="PF00213">
    <property type="entry name" value="OSCP"/>
    <property type="match status" value="1"/>
</dbReference>
<dbReference type="PRINTS" id="PR00125">
    <property type="entry name" value="ATPASEDELTA"/>
</dbReference>
<dbReference type="SUPFAM" id="SSF47928">
    <property type="entry name" value="N-terminal domain of the delta subunit of the F1F0-ATP synthase"/>
    <property type="match status" value="1"/>
</dbReference>
<dbReference type="PROSITE" id="PS00389">
    <property type="entry name" value="ATPASE_DELTA"/>
    <property type="match status" value="1"/>
</dbReference>
<gene>
    <name evidence="1" type="primary">atpH</name>
    <name type="synonym">uncH</name>
</gene>
<protein>
    <recommendedName>
        <fullName evidence="1">ATP synthase subunit delta, sodium ion specific</fullName>
    </recommendedName>
    <alternativeName>
        <fullName evidence="1">ATP synthase F(1) sector subunit delta</fullName>
    </alternativeName>
    <alternativeName>
        <fullName evidence="1">F-type ATPase subunit delta</fullName>
        <shortName evidence="1">F-ATPase subunit delta</shortName>
    </alternativeName>
</protein>
<sequence length="174" mass="19945">MIEAQVGRRYAEAIYEIAESNDNVKELYETLNGVMELYNTDKEFKTLVDHPLIKREDKKEFAKKIFGELEESSLNIIFYLIEKDRLSSIRGIVAEYLKIYYAKNQILDVEAIFAIEPTKDQKAKLIEQLEKKTGKKVNLEVSIDKSIIAGGIIKIGDEIIDGSVRRQLDTIARS</sequence>
<organism>
    <name type="scientific">Propionigenium modestum</name>
    <dbReference type="NCBI Taxonomy" id="2333"/>
    <lineage>
        <taxon>Bacteria</taxon>
        <taxon>Fusobacteriati</taxon>
        <taxon>Fusobacteriota</taxon>
        <taxon>Fusobacteriia</taxon>
        <taxon>Fusobacteriales</taxon>
        <taxon>Fusobacteriaceae</taxon>
        <taxon>Propionigenium</taxon>
    </lineage>
</organism>
<accession>P29708</accession>
<comment type="function">
    <text evidence="1">F(1)F(0) ATP synthase produces ATP from ADP in the presence of a proton or sodium gradient. F-type ATPases consist of two structural domains, F(1) containing the extramembraneous catalytic core and F(0) containing the membrane proton channel, linked together by a central stalk and a peripheral stalk. During catalysis, ATP synthesis in the catalytic domain of F(1) is coupled via a rotary mechanism of the central stalk subunits to proton translocation.</text>
</comment>
<comment type="function">
    <text evidence="1">This protein is part of the stalk that links CF(0) to CF(1). It either transmits conformational changes from CF(0) to CF(1) or is implicated in proton conduction.</text>
</comment>
<comment type="subunit">
    <text evidence="1">F-type ATPases have 2 components, F(1) - the catalytic core - and F(0) - the membrane proton channel. F(1) has five subunits: alpha(3), beta(3), gamma(1), delta(1), epsilon(1). F(0) has three main subunits: a(1), b(2) and c(10-14). The alpha and beta chains form an alternating ring which encloses part of the gamma chain. F(1) is attached to F(0) by a central stalk formed by the gamma and epsilon chains, while a peripheral stalk is formed by the delta and b chains.</text>
</comment>
<comment type="subcellular location">
    <subcellularLocation>
        <location evidence="1">Cell inner membrane</location>
        <topology evidence="1">Peripheral membrane protein</topology>
    </subcellularLocation>
</comment>
<comment type="miscellaneous">
    <text>The ATPase of P.modestum is of special interest because it uses sodium ions instead of protons as the physiological coupling ion.</text>
</comment>
<comment type="similarity">
    <text evidence="1">Belongs to the ATPase delta chain family.</text>
</comment>
<feature type="chain" id="PRO_0000193474" description="ATP synthase subunit delta, sodium ion specific">
    <location>
        <begin position="1"/>
        <end position="174"/>
    </location>
</feature>
<feature type="sequence conflict" description="In Ref. 2; CAA46897." evidence="2" ref="2">
    <original>KK</original>
    <variation>FF</variation>
    <location>
        <begin position="58"/>
        <end position="59"/>
    </location>
</feature>
<feature type="sequence conflict" description="In Ref. 2; CAA46897." evidence="2" ref="2">
    <original>FAIEP</original>
    <variation>LRMNL</variation>
    <location>
        <begin position="113"/>
        <end position="117"/>
    </location>
</feature>
<evidence type="ECO:0000255" key="1">
    <source>
        <dbReference type="HAMAP-Rule" id="MF_01416"/>
    </source>
</evidence>
<evidence type="ECO:0000305" key="2"/>
<name>ATPD_PROMO</name>
<keyword id="KW-0066">ATP synthesis</keyword>
<keyword id="KW-0997">Cell inner membrane</keyword>
<keyword id="KW-1003">Cell membrane</keyword>
<keyword id="KW-0139">CF(1)</keyword>
<keyword id="KW-0903">Direct protein sequencing</keyword>
<keyword id="KW-0375">Hydrogen ion transport</keyword>
<keyword id="KW-0406">Ion transport</keyword>
<keyword id="KW-0472">Membrane</keyword>
<keyword id="KW-0915">Sodium</keyword>
<keyword id="KW-0739">Sodium transport</keyword>
<keyword id="KW-0813">Transport</keyword>